<dbReference type="EC" id="3.4.21.92" evidence="1"/>
<dbReference type="EMBL" id="CP001001">
    <property type="protein sequence ID" value="ACB27091.1"/>
    <property type="molecule type" value="Genomic_DNA"/>
</dbReference>
<dbReference type="RefSeq" id="WP_012322036.1">
    <property type="nucleotide sequence ID" value="NC_010505.1"/>
</dbReference>
<dbReference type="SMR" id="B1LW28"/>
<dbReference type="STRING" id="426355.Mrad2831_5134"/>
<dbReference type="MEROPS" id="S14.001"/>
<dbReference type="KEGG" id="mrd:Mrad2831_5134"/>
<dbReference type="eggNOG" id="COG0740">
    <property type="taxonomic scope" value="Bacteria"/>
</dbReference>
<dbReference type="HOGENOM" id="CLU_058707_3_2_5"/>
<dbReference type="OrthoDB" id="9802800at2"/>
<dbReference type="Proteomes" id="UP000006589">
    <property type="component" value="Chromosome"/>
</dbReference>
<dbReference type="GO" id="GO:0005737">
    <property type="term" value="C:cytoplasm"/>
    <property type="evidence" value="ECO:0007669"/>
    <property type="project" value="UniProtKB-SubCell"/>
</dbReference>
<dbReference type="GO" id="GO:0009368">
    <property type="term" value="C:endopeptidase Clp complex"/>
    <property type="evidence" value="ECO:0007669"/>
    <property type="project" value="TreeGrafter"/>
</dbReference>
<dbReference type="GO" id="GO:0004176">
    <property type="term" value="F:ATP-dependent peptidase activity"/>
    <property type="evidence" value="ECO:0007669"/>
    <property type="project" value="InterPro"/>
</dbReference>
<dbReference type="GO" id="GO:0051117">
    <property type="term" value="F:ATPase binding"/>
    <property type="evidence" value="ECO:0007669"/>
    <property type="project" value="TreeGrafter"/>
</dbReference>
<dbReference type="GO" id="GO:0004252">
    <property type="term" value="F:serine-type endopeptidase activity"/>
    <property type="evidence" value="ECO:0007669"/>
    <property type="project" value="UniProtKB-UniRule"/>
</dbReference>
<dbReference type="GO" id="GO:0006515">
    <property type="term" value="P:protein quality control for misfolded or incompletely synthesized proteins"/>
    <property type="evidence" value="ECO:0007669"/>
    <property type="project" value="TreeGrafter"/>
</dbReference>
<dbReference type="CDD" id="cd07017">
    <property type="entry name" value="S14_ClpP_2"/>
    <property type="match status" value="1"/>
</dbReference>
<dbReference type="FunFam" id="3.90.226.10:FF:000001">
    <property type="entry name" value="ATP-dependent Clp protease proteolytic subunit"/>
    <property type="match status" value="1"/>
</dbReference>
<dbReference type="Gene3D" id="3.90.226.10">
    <property type="entry name" value="2-enoyl-CoA Hydratase, Chain A, domain 1"/>
    <property type="match status" value="1"/>
</dbReference>
<dbReference type="HAMAP" id="MF_00444">
    <property type="entry name" value="ClpP"/>
    <property type="match status" value="1"/>
</dbReference>
<dbReference type="InterPro" id="IPR001907">
    <property type="entry name" value="ClpP"/>
</dbReference>
<dbReference type="InterPro" id="IPR029045">
    <property type="entry name" value="ClpP/crotonase-like_dom_sf"/>
</dbReference>
<dbReference type="InterPro" id="IPR023562">
    <property type="entry name" value="ClpP/TepA"/>
</dbReference>
<dbReference type="InterPro" id="IPR033135">
    <property type="entry name" value="ClpP_His_AS"/>
</dbReference>
<dbReference type="InterPro" id="IPR018215">
    <property type="entry name" value="ClpP_Ser_AS"/>
</dbReference>
<dbReference type="NCBIfam" id="NF001368">
    <property type="entry name" value="PRK00277.1"/>
    <property type="match status" value="1"/>
</dbReference>
<dbReference type="NCBIfam" id="NF009205">
    <property type="entry name" value="PRK12553.1"/>
    <property type="match status" value="1"/>
</dbReference>
<dbReference type="PANTHER" id="PTHR10381">
    <property type="entry name" value="ATP-DEPENDENT CLP PROTEASE PROTEOLYTIC SUBUNIT"/>
    <property type="match status" value="1"/>
</dbReference>
<dbReference type="PANTHER" id="PTHR10381:SF70">
    <property type="entry name" value="ATP-DEPENDENT CLP PROTEASE PROTEOLYTIC SUBUNIT"/>
    <property type="match status" value="1"/>
</dbReference>
<dbReference type="Pfam" id="PF00574">
    <property type="entry name" value="CLP_protease"/>
    <property type="match status" value="1"/>
</dbReference>
<dbReference type="PRINTS" id="PR00127">
    <property type="entry name" value="CLPPROTEASEP"/>
</dbReference>
<dbReference type="SUPFAM" id="SSF52096">
    <property type="entry name" value="ClpP/crotonase"/>
    <property type="match status" value="1"/>
</dbReference>
<dbReference type="PROSITE" id="PS00382">
    <property type="entry name" value="CLP_PROTEASE_HIS"/>
    <property type="match status" value="1"/>
</dbReference>
<dbReference type="PROSITE" id="PS00381">
    <property type="entry name" value="CLP_PROTEASE_SER"/>
    <property type="match status" value="1"/>
</dbReference>
<accession>B1LW28</accession>
<protein>
    <recommendedName>
        <fullName evidence="1">ATP-dependent Clp protease proteolytic subunit</fullName>
        <ecNumber evidence="1">3.4.21.92</ecNumber>
    </recommendedName>
    <alternativeName>
        <fullName evidence="1">Endopeptidase Clp</fullName>
    </alternativeName>
</protein>
<sequence>MRDPIDVYNNALVPMVVEQSSRGERAFDIYSRLLRERIIFLTGPVEDYGASLIVAQLLFLEAENPKKEISFYINSPGGVVTSGLSIYDTMQFIRCPVTTLCVGQAASMGSLLLTAGEPGHRFALPNARIMVHQPSGGFQGQATDILIHAREIEALKRRLNEIYVKHTGRDYDTIHTALERDNFMTADAAKEFGLIDEVIEKRPEPAAA</sequence>
<comment type="function">
    <text evidence="1">Cleaves peptides in various proteins in a process that requires ATP hydrolysis. Has a chymotrypsin-like activity. Plays a major role in the degradation of misfolded proteins.</text>
</comment>
<comment type="catalytic activity">
    <reaction evidence="1">
        <text>Hydrolysis of proteins to small peptides in the presence of ATP and magnesium. alpha-casein is the usual test substrate. In the absence of ATP, only oligopeptides shorter than five residues are hydrolyzed (such as succinyl-Leu-Tyr-|-NHMec, and Leu-Tyr-Leu-|-Tyr-Trp, in which cleavage of the -Tyr-|-Leu- and -Tyr-|-Trp bonds also occurs).</text>
        <dbReference type="EC" id="3.4.21.92"/>
    </reaction>
</comment>
<comment type="subunit">
    <text evidence="1">Fourteen ClpP subunits assemble into 2 heptameric rings which stack back to back to give a disk-like structure with a central cavity, resembling the structure of eukaryotic proteasomes.</text>
</comment>
<comment type="subcellular location">
    <subcellularLocation>
        <location evidence="1">Cytoplasm</location>
    </subcellularLocation>
</comment>
<comment type="similarity">
    <text evidence="1">Belongs to the peptidase S14 family.</text>
</comment>
<evidence type="ECO:0000255" key="1">
    <source>
        <dbReference type="HAMAP-Rule" id="MF_00444"/>
    </source>
</evidence>
<keyword id="KW-0963">Cytoplasm</keyword>
<keyword id="KW-0378">Hydrolase</keyword>
<keyword id="KW-0645">Protease</keyword>
<keyword id="KW-0720">Serine protease</keyword>
<organism>
    <name type="scientific">Methylobacterium radiotolerans (strain ATCC 27329 / DSM 1819 / JCM 2831 / NBRC 15690 / NCIMB 10815 / 0-1)</name>
    <dbReference type="NCBI Taxonomy" id="426355"/>
    <lineage>
        <taxon>Bacteria</taxon>
        <taxon>Pseudomonadati</taxon>
        <taxon>Pseudomonadota</taxon>
        <taxon>Alphaproteobacteria</taxon>
        <taxon>Hyphomicrobiales</taxon>
        <taxon>Methylobacteriaceae</taxon>
        <taxon>Methylobacterium</taxon>
    </lineage>
</organism>
<reference key="1">
    <citation type="submission" date="2008-03" db="EMBL/GenBank/DDBJ databases">
        <title>Complete sequence of chromosome of Methylobacterium radiotolerans JCM 2831.</title>
        <authorList>
            <consortium name="US DOE Joint Genome Institute"/>
            <person name="Copeland A."/>
            <person name="Lucas S."/>
            <person name="Lapidus A."/>
            <person name="Glavina del Rio T."/>
            <person name="Dalin E."/>
            <person name="Tice H."/>
            <person name="Bruce D."/>
            <person name="Goodwin L."/>
            <person name="Pitluck S."/>
            <person name="Kiss H."/>
            <person name="Brettin T."/>
            <person name="Detter J.C."/>
            <person name="Han C."/>
            <person name="Kuske C.R."/>
            <person name="Schmutz J."/>
            <person name="Larimer F."/>
            <person name="Land M."/>
            <person name="Hauser L."/>
            <person name="Kyrpides N."/>
            <person name="Mikhailova N."/>
            <person name="Marx C.J."/>
            <person name="Richardson P."/>
        </authorList>
    </citation>
    <scope>NUCLEOTIDE SEQUENCE [LARGE SCALE GENOMIC DNA]</scope>
    <source>
        <strain>ATCC 27329 / DSM 1819 / JCM 2831 / NBRC 15690 / NCIMB 10815 / 0-1</strain>
    </source>
</reference>
<gene>
    <name evidence="1" type="primary">clpP</name>
    <name type="ordered locus">Mrad2831_5134</name>
</gene>
<name>CLPP_METRJ</name>
<feature type="chain" id="PRO_1000189657" description="ATP-dependent Clp protease proteolytic subunit">
    <location>
        <begin position="1"/>
        <end position="208"/>
    </location>
</feature>
<feature type="active site" description="Nucleophile" evidence="1">
    <location>
        <position position="107"/>
    </location>
</feature>
<feature type="active site" evidence="1">
    <location>
        <position position="132"/>
    </location>
</feature>
<proteinExistence type="inferred from homology"/>